<accession>D7L342</accession>
<name>CSPL8_ARALL</name>
<sequence>MDKTDQTAIDGSALELNRTEKTVEAVLRVASMALSITGLVIMIKNSISNDFGSLSYSNLGAFMYLVGANGVCAAYSLLSALAILALPCPISKVQVRTLFLLDQVVTYVVLAAGAVSAETVYLAYYGNIPITWSSACDSYGIFCHKALISVVFTFVVSLLYMLLSLISSYRLFSRFEAP</sequence>
<feature type="chain" id="PRO_0000412007" description="CASP-like protein 2A2">
    <location>
        <begin position="1"/>
        <end position="178"/>
    </location>
</feature>
<feature type="topological domain" description="Cytoplasmic" evidence="2">
    <location>
        <begin position="1"/>
        <end position="22"/>
    </location>
</feature>
<feature type="transmembrane region" description="Helical" evidence="2">
    <location>
        <begin position="23"/>
        <end position="43"/>
    </location>
</feature>
<feature type="topological domain" description="Extracellular" evidence="2">
    <location>
        <begin position="44"/>
        <end position="69"/>
    </location>
</feature>
<feature type="transmembrane region" description="Helical" evidence="2">
    <location>
        <begin position="70"/>
        <end position="90"/>
    </location>
</feature>
<feature type="topological domain" description="Cytoplasmic" evidence="2">
    <location>
        <begin position="91"/>
        <end position="96"/>
    </location>
</feature>
<feature type="transmembrane region" description="Helical" evidence="2">
    <location>
        <begin position="97"/>
        <end position="117"/>
    </location>
</feature>
<feature type="topological domain" description="Extracellular" evidence="2">
    <location>
        <begin position="118"/>
        <end position="145"/>
    </location>
</feature>
<feature type="transmembrane region" description="Helical" evidence="2">
    <location>
        <begin position="146"/>
        <end position="166"/>
    </location>
</feature>
<feature type="topological domain" description="Cytoplasmic" evidence="2">
    <location>
        <begin position="167"/>
        <end position="178"/>
    </location>
</feature>
<organism>
    <name type="scientific">Arabidopsis lyrata subsp. lyrata</name>
    <name type="common">Lyre-leaved rock-cress</name>
    <dbReference type="NCBI Taxonomy" id="81972"/>
    <lineage>
        <taxon>Eukaryota</taxon>
        <taxon>Viridiplantae</taxon>
        <taxon>Streptophyta</taxon>
        <taxon>Embryophyta</taxon>
        <taxon>Tracheophyta</taxon>
        <taxon>Spermatophyta</taxon>
        <taxon>Magnoliopsida</taxon>
        <taxon>eudicotyledons</taxon>
        <taxon>Gunneridae</taxon>
        <taxon>Pentapetalae</taxon>
        <taxon>rosids</taxon>
        <taxon>malvids</taxon>
        <taxon>Brassicales</taxon>
        <taxon>Brassicaceae</taxon>
        <taxon>Camelineae</taxon>
        <taxon>Arabidopsis</taxon>
    </lineage>
</organism>
<comment type="subunit">
    <text evidence="1">Homodimer and heterodimers.</text>
</comment>
<comment type="subcellular location">
    <subcellularLocation>
        <location evidence="1">Cell membrane</location>
        <topology evidence="1">Multi-pass membrane protein</topology>
    </subcellularLocation>
</comment>
<comment type="similarity">
    <text evidence="3">Belongs to the Casparian strip membrane proteins (CASP) family.</text>
</comment>
<protein>
    <recommendedName>
        <fullName>CASP-like protein 2A2</fullName>
        <shortName>AlCASPL2A2</shortName>
    </recommendedName>
</protein>
<gene>
    <name type="ORF">ARALYDRAFT_478855</name>
</gene>
<keyword id="KW-1003">Cell membrane</keyword>
<keyword id="KW-0472">Membrane</keyword>
<keyword id="KW-1185">Reference proteome</keyword>
<keyword id="KW-0812">Transmembrane</keyword>
<keyword id="KW-1133">Transmembrane helix</keyword>
<reference key="1">
    <citation type="journal article" date="2011" name="Nat. Genet.">
        <title>The Arabidopsis lyrata genome sequence and the basis of rapid genome size change.</title>
        <authorList>
            <person name="Hu T.T."/>
            <person name="Pattyn P."/>
            <person name="Bakker E.G."/>
            <person name="Cao J."/>
            <person name="Cheng J.-F."/>
            <person name="Clark R.M."/>
            <person name="Fahlgren N."/>
            <person name="Fawcett J.A."/>
            <person name="Grimwood J."/>
            <person name="Gundlach H."/>
            <person name="Haberer G."/>
            <person name="Hollister J.D."/>
            <person name="Ossowski S."/>
            <person name="Ottilar R.P."/>
            <person name="Salamov A.A."/>
            <person name="Schneeberger K."/>
            <person name="Spannagl M."/>
            <person name="Wang X."/>
            <person name="Yang L."/>
            <person name="Nasrallah M.E."/>
            <person name="Bergelson J."/>
            <person name="Carrington J.C."/>
            <person name="Gaut B.S."/>
            <person name="Schmutz J."/>
            <person name="Mayer K.F.X."/>
            <person name="Van de Peer Y."/>
            <person name="Grigoriev I.V."/>
            <person name="Nordborg M."/>
            <person name="Weigel D."/>
            <person name="Guo Y.-L."/>
        </authorList>
    </citation>
    <scope>NUCLEOTIDE SEQUENCE [LARGE SCALE GENOMIC DNA]</scope>
    <source>
        <strain>cv. MN47</strain>
    </source>
</reference>
<reference key="2">
    <citation type="journal article" date="2014" name="Plant Physiol.">
        <title>Functional and evolutionary analysis of the CASPARIAN STRIP MEMBRANE DOMAIN PROTEIN family.</title>
        <authorList>
            <person name="Roppolo D."/>
            <person name="Boeckmann B."/>
            <person name="Pfister A."/>
            <person name="Boutet E."/>
            <person name="Rubio M.C."/>
            <person name="Denervaud-Tendon V."/>
            <person name="Vermeer J.E."/>
            <person name="Gheyselinck J."/>
            <person name="Xenarios I."/>
            <person name="Geldner N."/>
        </authorList>
    </citation>
    <scope>GENE FAMILY</scope>
    <scope>NOMENCLATURE</scope>
</reference>
<dbReference type="EMBL" id="GL348715">
    <property type="protein sequence ID" value="EFH61300.1"/>
    <property type="molecule type" value="Genomic_DNA"/>
</dbReference>
<dbReference type="RefSeq" id="XP_002885041.1">
    <property type="nucleotide sequence ID" value="XM_002884995.1"/>
</dbReference>
<dbReference type="SMR" id="D7L342"/>
<dbReference type="STRING" id="81972.D7L342"/>
<dbReference type="EnsemblPlants" id="fgenesh2_kg.3__1556__AT3G14380.1">
    <property type="protein sequence ID" value="fgenesh2_kg.3__1556__AT3G14380.1"/>
    <property type="gene ID" value="fgenesh2_kg.3__1556__AT3G14380.1"/>
</dbReference>
<dbReference type="Gramene" id="fgenesh2_kg.3__1556__AT3G14380.1">
    <property type="protein sequence ID" value="fgenesh2_kg.3__1556__AT3G14380.1"/>
    <property type="gene ID" value="fgenesh2_kg.3__1556__AT3G14380.1"/>
</dbReference>
<dbReference type="eggNOG" id="ENOG502S0J7">
    <property type="taxonomic scope" value="Eukaryota"/>
</dbReference>
<dbReference type="HOGENOM" id="CLU_066104_2_2_1"/>
<dbReference type="OrthoDB" id="749363at2759"/>
<dbReference type="Proteomes" id="UP000008694">
    <property type="component" value="Unassembled WGS sequence"/>
</dbReference>
<dbReference type="GO" id="GO:0005886">
    <property type="term" value="C:plasma membrane"/>
    <property type="evidence" value="ECO:0007669"/>
    <property type="project" value="UniProtKB-SubCell"/>
</dbReference>
<dbReference type="GO" id="GO:0010227">
    <property type="term" value="P:floral organ abscission"/>
    <property type="evidence" value="ECO:0007669"/>
    <property type="project" value="EnsemblPlants"/>
</dbReference>
<dbReference type="InterPro" id="IPR006459">
    <property type="entry name" value="CASP/CASPL"/>
</dbReference>
<dbReference type="InterPro" id="IPR006702">
    <property type="entry name" value="CASP_dom"/>
</dbReference>
<dbReference type="NCBIfam" id="TIGR01569">
    <property type="entry name" value="A_tha_TIGR01569"/>
    <property type="match status" value="1"/>
</dbReference>
<dbReference type="PANTHER" id="PTHR33573:SF46">
    <property type="entry name" value="CASP-LIKE PROTEIN 2A1"/>
    <property type="match status" value="1"/>
</dbReference>
<dbReference type="PANTHER" id="PTHR33573">
    <property type="entry name" value="CASP-LIKE PROTEIN 4A4"/>
    <property type="match status" value="1"/>
</dbReference>
<dbReference type="Pfam" id="PF04535">
    <property type="entry name" value="CASP_dom"/>
    <property type="match status" value="1"/>
</dbReference>
<evidence type="ECO:0000250" key="1"/>
<evidence type="ECO:0000255" key="2"/>
<evidence type="ECO:0000305" key="3"/>
<proteinExistence type="inferred from homology"/>